<name>VGRG1_AERHY</name>
<reference key="1">
    <citation type="journal article" date="2013" name="Microbiology">
        <title>Evaluation of the roles played by Hcp and VgrG type 6 secretion system effectors in Aeromonas hydrophila SSU pathogenesis.</title>
        <authorList>
            <person name="Sha J."/>
            <person name="Rosenzweig J.A."/>
            <person name="Kozlova E.V."/>
            <person name="Wang S."/>
            <person name="Erova T.E."/>
            <person name="Kirtley M.L."/>
            <person name="van Lier C.J."/>
            <person name="Chopra A.K."/>
        </authorList>
    </citation>
    <scope>NUCLEOTIDE SEQUENCE [GENOMIC DNA]</scope>
    <source>
        <strain>SSU</strain>
    </source>
</reference>
<reference key="2">
    <citation type="journal article" date="2010" name="J. Bacteriol.">
        <title>A type VI secretion system effector protein, VgrG1, from Aeromonas hydrophila that induces host cell toxicity by ADP ribosylation of actin.</title>
        <authorList>
            <person name="Suarez G."/>
            <person name="Sierra J.C."/>
            <person name="Erova T.E."/>
            <person name="Sha J."/>
            <person name="Horneman A.J."/>
            <person name="Chopra A.K."/>
        </authorList>
    </citation>
    <scope>FUNCTION</scope>
    <scope>SUBCELLULAR LOCATION</scope>
    <scope>CATALYTIC ACTIVITY</scope>
</reference>
<keyword id="KW-0328">Glycosyltransferase</keyword>
<keyword id="KW-0548">Nucleotidyltransferase</keyword>
<keyword id="KW-0964">Secreted</keyword>
<keyword id="KW-0808">Transferase</keyword>
<dbReference type="EC" id="2.4.2.31" evidence="2"/>
<dbReference type="EMBL" id="JX646703">
    <property type="protein sequence ID" value="AFX59895.1"/>
    <property type="molecule type" value="Genomic_DNA"/>
</dbReference>
<dbReference type="SMR" id="K7WKL8"/>
<dbReference type="GO" id="GO:0005576">
    <property type="term" value="C:extracellular region"/>
    <property type="evidence" value="ECO:0007669"/>
    <property type="project" value="UniProtKB-SubCell"/>
</dbReference>
<dbReference type="GO" id="GO:0106274">
    <property type="term" value="F:NAD+-protein-arginine ADP-ribosyltransferase activity"/>
    <property type="evidence" value="ECO:0007669"/>
    <property type="project" value="UniProtKB-EC"/>
</dbReference>
<dbReference type="GO" id="GO:0016779">
    <property type="term" value="F:nucleotidyltransferase activity"/>
    <property type="evidence" value="ECO:0007669"/>
    <property type="project" value="UniProtKB-KW"/>
</dbReference>
<dbReference type="Gene3D" id="2.30.110.50">
    <property type="match status" value="1"/>
</dbReference>
<dbReference type="Gene3D" id="4.10.220.110">
    <property type="match status" value="1"/>
</dbReference>
<dbReference type="Gene3D" id="3.55.50.10">
    <property type="entry name" value="Baseplate protein-like domains"/>
    <property type="match status" value="1"/>
</dbReference>
<dbReference type="Gene3D" id="2.40.50.230">
    <property type="entry name" value="Gp5 N-terminal domain"/>
    <property type="match status" value="1"/>
</dbReference>
<dbReference type="InterPro" id="IPR006531">
    <property type="entry name" value="Gp5/Vgr_OB"/>
</dbReference>
<dbReference type="InterPro" id="IPR054030">
    <property type="entry name" value="Gp5_Vgr_C"/>
</dbReference>
<dbReference type="InterPro" id="IPR017847">
    <property type="entry name" value="T6SS_RhsGE_Vgr_subset"/>
</dbReference>
<dbReference type="InterPro" id="IPR006533">
    <property type="entry name" value="T6SS_Vgr_RhsGE"/>
</dbReference>
<dbReference type="InterPro" id="IPR050708">
    <property type="entry name" value="T6SS_VgrG/RHS"/>
</dbReference>
<dbReference type="InterPro" id="IPR037026">
    <property type="entry name" value="Vgr_OB-fold_dom_sf"/>
</dbReference>
<dbReference type="NCBIfam" id="TIGR01646">
    <property type="entry name" value="vgr_GE"/>
    <property type="match status" value="1"/>
</dbReference>
<dbReference type="NCBIfam" id="TIGR03361">
    <property type="entry name" value="VI_Rhs_Vgr"/>
    <property type="match status" value="1"/>
</dbReference>
<dbReference type="PANTHER" id="PTHR32305">
    <property type="match status" value="1"/>
</dbReference>
<dbReference type="PANTHER" id="PTHR32305:SF11">
    <property type="entry name" value="TYPE VI SECRETION SYSTEM SPIKE PROTEIN VGRG3"/>
    <property type="match status" value="1"/>
</dbReference>
<dbReference type="Pfam" id="PF22178">
    <property type="entry name" value="Gp5_trimer_C"/>
    <property type="match status" value="1"/>
</dbReference>
<dbReference type="Pfam" id="PF04717">
    <property type="entry name" value="Phage_base_V"/>
    <property type="match status" value="1"/>
</dbReference>
<dbReference type="Pfam" id="PF05954">
    <property type="entry name" value="Phage_GPD"/>
    <property type="match status" value="1"/>
</dbReference>
<dbReference type="SUPFAM" id="SSF69255">
    <property type="entry name" value="gp5 N-terminal domain-like"/>
    <property type="match status" value="1"/>
</dbReference>
<dbReference type="SUPFAM" id="SSF69349">
    <property type="entry name" value="Phage fibre proteins"/>
    <property type="match status" value="1"/>
</dbReference>
<dbReference type="SUPFAM" id="SSF69279">
    <property type="entry name" value="Phage tail proteins"/>
    <property type="match status" value="2"/>
</dbReference>
<comment type="function">
    <text evidence="2">Part of the type VI secretion system specialized secretion system, which delivers several virulence factors in both prokaryotic and eukaryotic cells during infection. Acts directly as an secreted effector with an actin ADP-ribosyltransferase activity that disrupts the host actin cytoskeleton, leading to a decrease in host cell viability and an increase in apoptosis.</text>
</comment>
<comment type="catalytic activity">
    <reaction evidence="2">
        <text>L-arginyl-[protein] + NAD(+) = N(omega)-(ADP-D-ribosyl)-L-arginyl-[protein] + nicotinamide + H(+)</text>
        <dbReference type="Rhea" id="RHEA:19149"/>
        <dbReference type="Rhea" id="RHEA-COMP:10532"/>
        <dbReference type="Rhea" id="RHEA-COMP:15087"/>
        <dbReference type="ChEBI" id="CHEBI:15378"/>
        <dbReference type="ChEBI" id="CHEBI:17154"/>
        <dbReference type="ChEBI" id="CHEBI:29965"/>
        <dbReference type="ChEBI" id="CHEBI:57540"/>
        <dbReference type="ChEBI" id="CHEBI:142554"/>
        <dbReference type="EC" id="2.4.2.31"/>
    </reaction>
</comment>
<comment type="subcellular location">
    <subcellularLocation>
        <location evidence="2">Secreted</location>
    </subcellularLocation>
</comment>
<comment type="similarity">
    <text evidence="4">Belongs to the VgrG protein family.</text>
</comment>
<accession>K7WKL8</accession>
<protein>
    <recommendedName>
        <fullName evidence="3">Type VI secretion system spike protein VgrG1</fullName>
    </recommendedName>
    <alternativeName>
        <fullName evidence="3">Actin ADP-ribosyltransferase</fullName>
        <ecNumber evidence="2">2.4.2.31</ecNumber>
    </alternativeName>
</protein>
<evidence type="ECO:0000256" key="1">
    <source>
        <dbReference type="SAM" id="MobiDB-lite"/>
    </source>
</evidence>
<evidence type="ECO:0000269" key="2">
    <source>
    </source>
</evidence>
<evidence type="ECO:0000303" key="3">
    <source>
    </source>
</evidence>
<evidence type="ECO:0000305" key="4"/>
<organism>
    <name type="scientific">Aeromonas hydrophila</name>
    <dbReference type="NCBI Taxonomy" id="644"/>
    <lineage>
        <taxon>Bacteria</taxon>
        <taxon>Pseudomonadati</taxon>
        <taxon>Pseudomonadota</taxon>
        <taxon>Gammaproteobacteria</taxon>
        <taxon>Aeromonadales</taxon>
        <taxon>Aeromonadaceae</taxon>
        <taxon>Aeromonas</taxon>
    </lineage>
</organism>
<proteinExistence type="evidence at protein level"/>
<sequence>MADSTGLQFTVKVGALPENTFVVAEFALDEALNRPFNLRLELASAQPDIDFGAVLDQPCELLVWYNGELQRRVCGVVSDFAQGDSGFRRTRYQLRVLPALWRLSLRQNSRIFQAQKPDEILSILLQEHGITDYAFALKNEHAKREYCVQYRESDLDFVNRLAAEEGMFYFHEFEAGKHRIVFADDAAALTQGPELFFNLGNRSLEQGPYVRQFHYREAVRPSDVELKDYSFKTPAYGLSHKKVGAELTHQRDTYQHFDFPGRYKEDPSGKAFAQHRLDALRNDAVAGQAKSNCAALLPGQSFSLTEHPNGSLNTDWQIVRIQHTGLQPQALEEEGGSGPTVYHNEFGVVKASTTWRARIGSPEAPHKPMVDGPQIAIVVGPDGEEIYCDEHGRVKLQFPWDRYGSSNDQSSCWVRVSQGWAGGQYGMMAIPRIGHEVIVSFLEGDPDQPIVTGRTYHATNRPPYELPANKTRTVLRTETHQGEGFNELRFEDQVGQEEIYIHGQKDLNVLIENDAAWHIKHDEHTDVDNERVTRIKANDHLTVEGEKRDQIKADYSLTVDTSMHQKLGDSWLTQAGQEVHVKAGAKVVLEAGSEITVKVGGCFIKVDGGGVTLVGPTIKMNSGGSPSSGSGWGGKSPVDPLGVSVPPKPKVPLTPAQLATMKSAAPFCEECEKCKEGGCEI</sequence>
<gene>
    <name type="primary">vgrG1</name>
</gene>
<feature type="chain" id="PRO_0000448968" description="Type VI secretion system spike protein VgrG1">
    <location>
        <begin position="1"/>
        <end position="681"/>
    </location>
</feature>
<feature type="region of interest" description="Disordered" evidence="1">
    <location>
        <begin position="621"/>
        <end position="640"/>
    </location>
</feature>